<proteinExistence type="inferred from homology"/>
<sequence>MKVSAIAAVAALAAVAVAGPVRPSGDKYLIELGPGKTQWVTKDQKHKMRAAGQTFIDITNEIGTNFVATKPVAANYPKNIAHPSMVSSMIANLSKENLMRDLQAMSEFNNRYYESQTGVESANWLMEQVKKVIDESGAQGAKVEKIENQFNQFNIIATIPGSSESTVIVGAHQDSINQEDPMGGRAPGADDNGSGSVVVLEALRGVLGSKAFRAANNTNTLEFHWYAGEEGGLLGSQTVFSKYKSDGRQVKAMLNQDLAGFKGQGQEQFGLITDNTNQELNQFCKMIVEKYASIPIVDTECGYACSDHASADRNGFPASMVAETAFEDSNPHIHSADDTVEYLDFDHMLEHAKVALGFMTELGMASNL</sequence>
<name>LAP3_ARTBC</name>
<feature type="signal peptide" evidence="2">
    <location>
        <begin position="1"/>
        <end position="18"/>
    </location>
</feature>
<feature type="chain" id="PRO_0000397771" description="Probable leucine aminopeptidase ARB_03492">
    <location>
        <begin position="19"/>
        <end position="368"/>
    </location>
</feature>
<feature type="binding site" evidence="1">
    <location>
        <position position="172"/>
    </location>
    <ligand>
        <name>Zn(2+)</name>
        <dbReference type="ChEBI" id="CHEBI:29105"/>
        <label>1</label>
    </ligand>
</feature>
<feature type="binding site" evidence="1">
    <location>
        <position position="191"/>
    </location>
    <ligand>
        <name>Zn(2+)</name>
        <dbReference type="ChEBI" id="CHEBI:29105"/>
        <label>1</label>
    </ligand>
</feature>
<feature type="binding site" evidence="1">
    <location>
        <position position="191"/>
    </location>
    <ligand>
        <name>Zn(2+)</name>
        <dbReference type="ChEBI" id="CHEBI:29105"/>
        <label>2</label>
        <note>catalytic</note>
    </ligand>
</feature>
<feature type="binding site" evidence="1">
    <location>
        <position position="230"/>
    </location>
    <ligand>
        <name>Zn(2+)</name>
        <dbReference type="ChEBI" id="CHEBI:29105"/>
        <label>2</label>
        <note>catalytic</note>
    </ligand>
</feature>
<feature type="binding site" evidence="1">
    <location>
        <position position="257"/>
    </location>
    <ligand>
        <name>Zn(2+)</name>
        <dbReference type="ChEBI" id="CHEBI:29105"/>
        <label>1</label>
    </ligand>
</feature>
<feature type="binding site" evidence="1">
    <location>
        <position position="334"/>
    </location>
    <ligand>
        <name>Zn(2+)</name>
        <dbReference type="ChEBI" id="CHEBI:29105"/>
        <label>2</label>
        <note>catalytic</note>
    </ligand>
</feature>
<feature type="glycosylation site" description="N-linked (GlcNAc...) asparagine" evidence="2">
    <location>
        <position position="92"/>
    </location>
</feature>
<feature type="glycosylation site" description="N-linked (GlcNAc...) asparagine" evidence="2">
    <location>
        <position position="192"/>
    </location>
</feature>
<feature type="glycosylation site" description="N-linked (GlcNAc...) asparagine" evidence="2">
    <location>
        <position position="216"/>
    </location>
</feature>
<feature type="disulfide bond" evidence="1">
    <location>
        <begin position="301"/>
        <end position="305"/>
    </location>
</feature>
<dbReference type="EC" id="3.4.11.-"/>
<dbReference type="EMBL" id="ABSU01000035">
    <property type="protein sequence ID" value="EFE29597.1"/>
    <property type="molecule type" value="Genomic_DNA"/>
</dbReference>
<dbReference type="RefSeq" id="XP_003010237.1">
    <property type="nucleotide sequence ID" value="XM_003010191.1"/>
</dbReference>
<dbReference type="SMR" id="D4B4V2"/>
<dbReference type="MEROPS" id="M28.022"/>
<dbReference type="GeneID" id="9525505"/>
<dbReference type="KEGG" id="abe:ARB_03492"/>
<dbReference type="eggNOG" id="KOG2195">
    <property type="taxonomic scope" value="Eukaryota"/>
</dbReference>
<dbReference type="HOGENOM" id="CLU_025866_0_0_1"/>
<dbReference type="OMA" id="DHASWYK"/>
<dbReference type="OrthoDB" id="2214at2759"/>
<dbReference type="Proteomes" id="UP000008866">
    <property type="component" value="Unassembled WGS sequence"/>
</dbReference>
<dbReference type="GO" id="GO:0005576">
    <property type="term" value="C:extracellular region"/>
    <property type="evidence" value="ECO:0007669"/>
    <property type="project" value="UniProtKB-SubCell"/>
</dbReference>
<dbReference type="GO" id="GO:0004177">
    <property type="term" value="F:aminopeptidase activity"/>
    <property type="evidence" value="ECO:0007669"/>
    <property type="project" value="UniProtKB-KW"/>
</dbReference>
<dbReference type="GO" id="GO:0046872">
    <property type="term" value="F:metal ion binding"/>
    <property type="evidence" value="ECO:0007669"/>
    <property type="project" value="UniProtKB-KW"/>
</dbReference>
<dbReference type="GO" id="GO:0008235">
    <property type="term" value="F:metalloexopeptidase activity"/>
    <property type="evidence" value="ECO:0007669"/>
    <property type="project" value="InterPro"/>
</dbReference>
<dbReference type="GO" id="GO:0006508">
    <property type="term" value="P:proteolysis"/>
    <property type="evidence" value="ECO:0007669"/>
    <property type="project" value="UniProtKB-KW"/>
</dbReference>
<dbReference type="CDD" id="cd03879">
    <property type="entry name" value="M28_AAP"/>
    <property type="match status" value="1"/>
</dbReference>
<dbReference type="FunFam" id="3.40.630.10:FF:000042">
    <property type="entry name" value="Peptide hydrolase"/>
    <property type="match status" value="1"/>
</dbReference>
<dbReference type="Gene3D" id="3.40.630.10">
    <property type="entry name" value="Zn peptidases"/>
    <property type="match status" value="1"/>
</dbReference>
<dbReference type="InterPro" id="IPR045175">
    <property type="entry name" value="M28_fam"/>
</dbReference>
<dbReference type="InterPro" id="IPR007484">
    <property type="entry name" value="Peptidase_M28"/>
</dbReference>
<dbReference type="PANTHER" id="PTHR12147:SF56">
    <property type="entry name" value="AMINOPEPTIDASE YDR415C-RELATED"/>
    <property type="match status" value="1"/>
</dbReference>
<dbReference type="PANTHER" id="PTHR12147">
    <property type="entry name" value="METALLOPEPTIDASE M28 FAMILY MEMBER"/>
    <property type="match status" value="1"/>
</dbReference>
<dbReference type="Pfam" id="PF04389">
    <property type="entry name" value="Peptidase_M28"/>
    <property type="match status" value="1"/>
</dbReference>
<dbReference type="SUPFAM" id="SSF53187">
    <property type="entry name" value="Zn-dependent exopeptidases"/>
    <property type="match status" value="1"/>
</dbReference>
<gene>
    <name type="ORF">ARB_03492</name>
</gene>
<reference key="1">
    <citation type="journal article" date="2011" name="Genome Biol.">
        <title>Comparative and functional genomics provide insights into the pathogenicity of dermatophytic fungi.</title>
        <authorList>
            <person name="Burmester A."/>
            <person name="Shelest E."/>
            <person name="Gloeckner G."/>
            <person name="Heddergott C."/>
            <person name="Schindler S."/>
            <person name="Staib P."/>
            <person name="Heidel A."/>
            <person name="Felder M."/>
            <person name="Petzold A."/>
            <person name="Szafranski K."/>
            <person name="Feuermann M."/>
            <person name="Pedruzzi I."/>
            <person name="Priebe S."/>
            <person name="Groth M."/>
            <person name="Winkler R."/>
            <person name="Li W."/>
            <person name="Kniemeyer O."/>
            <person name="Schroeckh V."/>
            <person name="Hertweck C."/>
            <person name="Hube B."/>
            <person name="White T.C."/>
            <person name="Platzer M."/>
            <person name="Guthke R."/>
            <person name="Heitman J."/>
            <person name="Woestemeyer J."/>
            <person name="Zipfel P.F."/>
            <person name="Monod M."/>
            <person name="Brakhage A.A."/>
        </authorList>
    </citation>
    <scope>NUCLEOTIDE SEQUENCE [LARGE SCALE GENOMIC DNA]</scope>
    <source>
        <strain>ATCC MYA-4681 / CBS 112371</strain>
    </source>
</reference>
<keyword id="KW-0031">Aminopeptidase</keyword>
<keyword id="KW-1015">Disulfide bond</keyword>
<keyword id="KW-0325">Glycoprotein</keyword>
<keyword id="KW-0378">Hydrolase</keyword>
<keyword id="KW-0479">Metal-binding</keyword>
<keyword id="KW-0645">Protease</keyword>
<keyword id="KW-1185">Reference proteome</keyword>
<keyword id="KW-0964">Secreted</keyword>
<keyword id="KW-0732">Signal</keyword>
<keyword id="KW-0843">Virulence</keyword>
<keyword id="KW-0862">Zinc</keyword>
<comment type="function">
    <text evidence="1">Probable extracellular aminopeptidase which contributes to pathogenicity.</text>
</comment>
<comment type="cofactor">
    <cofactor evidence="1">
        <name>Zn(2+)</name>
        <dbReference type="ChEBI" id="CHEBI:29105"/>
    </cofactor>
    <text evidence="1">Binds 2 Zn(2+) ions per subunit.</text>
</comment>
<comment type="subunit">
    <text evidence="1">Monomer.</text>
</comment>
<comment type="subcellular location">
    <subcellularLocation>
        <location evidence="1">Secreted</location>
    </subcellularLocation>
</comment>
<comment type="similarity">
    <text evidence="3">Belongs to the peptidase M28 family. M28E subfamily.</text>
</comment>
<accession>D4B4V2</accession>
<evidence type="ECO:0000250" key="1"/>
<evidence type="ECO:0000255" key="2"/>
<evidence type="ECO:0000305" key="3"/>
<protein>
    <recommendedName>
        <fullName>Probable leucine aminopeptidase ARB_03492</fullName>
        <ecNumber>3.4.11.-</ecNumber>
    </recommendedName>
    <alternativeName>
        <fullName>Leucyl aminopeptidase ARB_03492</fullName>
    </alternativeName>
</protein>
<organism>
    <name type="scientific">Arthroderma benhamiae (strain ATCC MYA-4681 / CBS 112371)</name>
    <name type="common">Trichophyton mentagrophytes</name>
    <dbReference type="NCBI Taxonomy" id="663331"/>
    <lineage>
        <taxon>Eukaryota</taxon>
        <taxon>Fungi</taxon>
        <taxon>Dikarya</taxon>
        <taxon>Ascomycota</taxon>
        <taxon>Pezizomycotina</taxon>
        <taxon>Eurotiomycetes</taxon>
        <taxon>Eurotiomycetidae</taxon>
        <taxon>Onygenales</taxon>
        <taxon>Arthrodermataceae</taxon>
        <taxon>Trichophyton</taxon>
    </lineage>
</organism>